<name>VPS11_CAEEL</name>
<evidence type="ECO:0000250" key="1">
    <source>
        <dbReference type="UniProtKB" id="Q9H270"/>
    </source>
</evidence>
<evidence type="ECO:0000255" key="2">
    <source>
        <dbReference type="PROSITE-ProRule" id="PRU00175"/>
    </source>
</evidence>
<evidence type="ECO:0000256" key="3">
    <source>
        <dbReference type="SAM" id="MobiDB-lite"/>
    </source>
</evidence>
<evidence type="ECO:0000269" key="4">
    <source>
    </source>
</evidence>
<evidence type="ECO:0000269" key="5">
    <source>
    </source>
</evidence>
<evidence type="ECO:0000269" key="6">
    <source>
    </source>
</evidence>
<evidence type="ECO:0000269" key="7">
    <source>
    </source>
</evidence>
<evidence type="ECO:0000269" key="8">
    <source>
    </source>
</evidence>
<evidence type="ECO:0000305" key="9"/>
<evidence type="ECO:0000312" key="10">
    <source>
        <dbReference type="WormBase" id="R06F6.2"/>
    </source>
</evidence>
<accession>Q09600</accession>
<proteinExistence type="inferred from homology"/>
<gene>
    <name evidence="10" type="primary">vps-11</name>
    <name evidence="10" type="ORF">R06F6.2</name>
</gene>
<sequence>MTEFGWRRFNFFDRSVVFDKDDPKQKFMGLKDVAVDCWCSSGGSVYLGEAKGGVFQLTNQFSEYYWKAYQKSLASLHSADKYLFSIGEDDETVNTLLKIWDPERVEKNTPHVMRTIRMSPLNPTSSSPACSIAVHSSLQSVVVGYTDGTVLFYQGDVLHDKSLNSRWIKVRDSSVGEGSVTGLAIAVLPASKTVVFVITQKHVHSYVLENGRTVIAHKKHDANGATADCWTFDESTGQLIVASREMLFFYDADQCIDMDGGEVGRCLQLGRGHEKLQLVASGQYLALLTKHHSLIQKERDSEFMTMLSVYDIKGQYVGFSCSLPNLCRLFIAGSTMLVLSHDGLLSELIEKNLATKLDILVKKSMFDVAVLIAKNSRDGGDYLKGIHAKYGNYLYGKGDYENAIQQYKETIGMLEPSYVMKRYLDSSKIKELCIYLECLHDAKRDNEHQTKILMNAYAKQGEKKKLMEFVNKITDGTRVSRMRDVFEILLKWNYLAEASLLATKFQMHEDALNVIIHHMHKYTMGVTYISKMPIESVIEMTGKFGRDLLIHARDDLMHMLWEKIQENTDAKKNNFMRIFDIFMGDMDASRVFLSYIENQTNEHDEFIIPILECQMRLFKVNSDWSQERLEEDIYRFINKKNEDAALQMAQLFDCTPVIEHILMRCHKSKELMMYHQKKRDLEAIIRLCQSCSKEEKRRLWLDALSFIGKHATARDELIIIDLLKEIEASEQIHPLVVLELLAKNEHLTISSVRDYIIAWLRKQQIIIEEDRNTIKENNKAMGELDGTVESLKFNAQIMQVTKCSACDTPLQLPTVHFLCKHAYHVHCFESYNMDGSDKCPACQTTRDTTRDEEISYHKFQKELAEASNGMELIAMYLQRGLFDEKTKKTKKSEAKKDPFSTGRASTTTNPFDDDEVTTISRTMSTVSSNMATPSRQRSITRKDDDSTNPFFNSDSGTRLSTYDESKNPFGAPAPSTNPFD</sequence>
<organism>
    <name type="scientific">Caenorhabditis elegans</name>
    <dbReference type="NCBI Taxonomy" id="6239"/>
    <lineage>
        <taxon>Eukaryota</taxon>
        <taxon>Metazoa</taxon>
        <taxon>Ecdysozoa</taxon>
        <taxon>Nematoda</taxon>
        <taxon>Chromadorea</taxon>
        <taxon>Rhabditida</taxon>
        <taxon>Rhabditina</taxon>
        <taxon>Rhabditomorpha</taxon>
        <taxon>Rhabditoidea</taxon>
        <taxon>Rhabditidae</taxon>
        <taxon>Peloderinae</taxon>
        <taxon>Caenorhabditis</taxon>
    </lineage>
</organism>
<feature type="chain" id="PRO_0000056326" description="Vacuolar protein sorting-associated protein 11 homolog">
    <location>
        <begin position="1"/>
        <end position="980"/>
    </location>
</feature>
<feature type="repeat" description="CHCR">
    <location>
        <begin position="407"/>
        <end position="554"/>
    </location>
</feature>
<feature type="zinc finger region" description="RING-type; atypical" evidence="2">
    <location>
        <begin position="803"/>
        <end position="843"/>
    </location>
</feature>
<feature type="region of interest" description="Disordered" evidence="3">
    <location>
        <begin position="886"/>
        <end position="980"/>
    </location>
</feature>
<feature type="compositionally biased region" description="Basic and acidic residues" evidence="3">
    <location>
        <begin position="886"/>
        <end position="898"/>
    </location>
</feature>
<feature type="compositionally biased region" description="Polar residues" evidence="3">
    <location>
        <begin position="917"/>
        <end position="937"/>
    </location>
</feature>
<feature type="compositionally biased region" description="Polar residues" evidence="3">
    <location>
        <begin position="947"/>
        <end position="960"/>
    </location>
</feature>
<protein>
    <recommendedName>
        <fullName>Vacuolar protein sorting-associated protein 11 homolog</fullName>
    </recommendedName>
</protein>
<reference key="1">
    <citation type="journal article" date="1998" name="Science">
        <title>Genome sequence of the nematode C. elegans: a platform for investigating biology.</title>
        <authorList>
            <consortium name="The C. elegans sequencing consortium"/>
        </authorList>
    </citation>
    <scope>NUCLEOTIDE SEQUENCE [LARGE SCALE GENOMIC DNA]</scope>
    <source>
        <strain>Bristol N2</strain>
    </source>
</reference>
<reference key="2">
    <citation type="journal article" date="2008" name="Nat. Cell Biol.">
        <title>A pathway for phagosome maturation during engulfment of apoptotic cells.</title>
        <authorList>
            <person name="Kinchen J.M."/>
            <person name="Doukoumetzidis K."/>
            <person name="Almendinger J."/>
            <person name="Stergiou L."/>
            <person name="Tosello-Trampont A."/>
            <person name="Sifri C.D."/>
            <person name="Hengartner M.O."/>
            <person name="Ravichandran K.S."/>
        </authorList>
    </citation>
    <scope>FUNCTION</scope>
    <scope>DISRUPTION PHENOTYPE</scope>
</reference>
<reference key="3">
    <citation type="journal article" date="2009" name="Mol. Biol. Cell">
        <title>Lysosome biogenesis mediated by vps-18 affects apoptotic cell degradation in Caenorhabditis elegans.</title>
        <authorList>
            <person name="Xiao H."/>
            <person name="Chen D."/>
            <person name="Fang Z."/>
            <person name="Xu J."/>
            <person name="Sun X."/>
            <person name="Song S."/>
            <person name="Liu J."/>
            <person name="Yang C."/>
        </authorList>
    </citation>
    <scope>FUNCTION</scope>
    <scope>DISRUPTION PHENOTYPE</scope>
</reference>
<reference key="4">
    <citation type="journal article" date="2014" name="Mol. Biol. Cell">
        <title>Caenorhabditis elegans HOPS and CCZ-1 mediate trafficking to lysosome-related organelles independently of RAB-7 and SAND-1.</title>
        <authorList>
            <person name="Delahaye J.L."/>
            <person name="Foster O.K."/>
            <person name="Vine A."/>
            <person name="Saxton D.S."/>
            <person name="Curtin T.P."/>
            <person name="Somhegyi H."/>
            <person name="Salesky R."/>
            <person name="Hermann G.J."/>
        </authorList>
    </citation>
    <scope>FUNCTION</scope>
    <scope>DISRUPTION PHENOTYPE</scope>
</reference>
<reference key="5">
    <citation type="journal article" date="2014" name="Mol. Biol. Cell">
        <title>Loss of the Sec1/Munc18-family proteins VPS-33.2 and VPS-33.1 bypasses a block in endosome maturation in Caenorhabditis elegans.</title>
        <authorList>
            <person name="Solinger J.A."/>
            <person name="Spang A."/>
        </authorList>
    </citation>
    <scope>FUNCTION</scope>
    <scope>DISRUPTION PHENOTYPE</scope>
</reference>
<reference key="6">
    <citation type="journal article" date="2016" name="J. Cell Biol.">
        <title>Negative regulation of phosphatidylinositol 3-phosphate levels in early-to-late endosome conversion.</title>
        <authorList>
            <person name="Liu K."/>
            <person name="Jian Y."/>
            <person name="Sun X."/>
            <person name="Yang C."/>
            <person name="Gao Z."/>
            <person name="Zhang Z."/>
            <person name="Liu X."/>
            <person name="Li Y."/>
            <person name="Xu J."/>
            <person name="Jing Y."/>
            <person name="Mitani S."/>
            <person name="He S."/>
            <person name="Yang C."/>
        </authorList>
    </citation>
    <scope>FUNCTION</scope>
    <scope>DISRUPTION PHENOTYPE</scope>
</reference>
<reference key="7">
    <citation type="journal article" date="2016" name="J. Cell Biol.">
        <title>Correction: Negative regulation of phosphatidylinositol 3-phosphate levels in early-to-late endosome conversion.</title>
        <authorList>
            <person name="Liu K."/>
            <person name="Jian Y."/>
            <person name="Sun X."/>
            <person name="Yang C."/>
            <person name="Gao Z."/>
            <person name="Zhang Z."/>
            <person name="Liu X."/>
            <person name="Li Y."/>
            <person name="Xu J."/>
            <person name="Jing Y."/>
            <person name="Mitani S."/>
            <person name="He S."/>
            <person name="Yang C."/>
        </authorList>
    </citation>
    <scope>ERRATUM OF PUBMED:26783301</scope>
</reference>
<dbReference type="EMBL" id="Z46794">
    <property type="protein sequence ID" value="CAA86774.2"/>
    <property type="molecule type" value="Genomic_DNA"/>
</dbReference>
<dbReference type="PIR" id="T23975">
    <property type="entry name" value="T23975"/>
</dbReference>
<dbReference type="RefSeq" id="NP_496322.2">
    <property type="nucleotide sequence ID" value="NM_063921.7"/>
</dbReference>
<dbReference type="SMR" id="Q09600"/>
<dbReference type="BioGRID" id="39974">
    <property type="interactions" value="4"/>
</dbReference>
<dbReference type="ComplexPortal" id="CPX-1136">
    <property type="entry name" value="HOPS tethering complex"/>
</dbReference>
<dbReference type="ComplexPortal" id="CPX-1137">
    <property type="entry name" value="CORVET tethering complex"/>
</dbReference>
<dbReference type="FunCoup" id="Q09600">
    <property type="interactions" value="2374"/>
</dbReference>
<dbReference type="STRING" id="6239.R06F6.2.1"/>
<dbReference type="PaxDb" id="6239-R06F6.2"/>
<dbReference type="PeptideAtlas" id="Q09600"/>
<dbReference type="EnsemblMetazoa" id="R06F6.2.1">
    <property type="protein sequence ID" value="R06F6.2.1"/>
    <property type="gene ID" value="WBGene00011067"/>
</dbReference>
<dbReference type="GeneID" id="174661"/>
<dbReference type="KEGG" id="cel:CELE_R06F6.2"/>
<dbReference type="UCSC" id="R06F6.2">
    <property type="organism name" value="c. elegans"/>
</dbReference>
<dbReference type="AGR" id="WB:WBGene00011067"/>
<dbReference type="CTD" id="174661"/>
<dbReference type="WormBase" id="R06F6.2">
    <property type="protein sequence ID" value="CE43323"/>
    <property type="gene ID" value="WBGene00011067"/>
    <property type="gene designation" value="vps-11"/>
</dbReference>
<dbReference type="eggNOG" id="KOG2114">
    <property type="taxonomic scope" value="Eukaryota"/>
</dbReference>
<dbReference type="GeneTree" id="ENSGT00940000153635"/>
<dbReference type="HOGENOM" id="CLU_001287_0_1_1"/>
<dbReference type="InParanoid" id="Q09600"/>
<dbReference type="OMA" id="ENENECP"/>
<dbReference type="OrthoDB" id="26184at2759"/>
<dbReference type="PhylomeDB" id="Q09600"/>
<dbReference type="PRO" id="PR:Q09600"/>
<dbReference type="Proteomes" id="UP000001940">
    <property type="component" value="Chromosome II"/>
</dbReference>
<dbReference type="Bgee" id="WBGene00011067">
    <property type="expression patterns" value="Expressed in adult organism and 5 other cell types or tissues"/>
</dbReference>
<dbReference type="GO" id="GO:0033263">
    <property type="term" value="C:CORVET complex"/>
    <property type="evidence" value="ECO:0000303"/>
    <property type="project" value="ComplexPortal"/>
</dbReference>
<dbReference type="GO" id="GO:0031901">
    <property type="term" value="C:early endosome membrane"/>
    <property type="evidence" value="ECO:0000303"/>
    <property type="project" value="ComplexPortal"/>
</dbReference>
<dbReference type="GO" id="GO:0005768">
    <property type="term" value="C:endosome"/>
    <property type="evidence" value="ECO:0000318"/>
    <property type="project" value="GO_Central"/>
</dbReference>
<dbReference type="GO" id="GO:0030897">
    <property type="term" value="C:HOPS complex"/>
    <property type="evidence" value="ECO:0000250"/>
    <property type="project" value="WormBase"/>
</dbReference>
<dbReference type="GO" id="GO:0031902">
    <property type="term" value="C:late endosome membrane"/>
    <property type="evidence" value="ECO:0007669"/>
    <property type="project" value="UniProtKB-SubCell"/>
</dbReference>
<dbReference type="GO" id="GO:0005765">
    <property type="term" value="C:lysosomal membrane"/>
    <property type="evidence" value="ECO:0007669"/>
    <property type="project" value="UniProtKB-SubCell"/>
</dbReference>
<dbReference type="GO" id="GO:0030674">
    <property type="term" value="F:protein-macromolecule adaptor activity"/>
    <property type="evidence" value="ECO:0000318"/>
    <property type="project" value="GO_Central"/>
</dbReference>
<dbReference type="GO" id="GO:0008270">
    <property type="term" value="F:zinc ion binding"/>
    <property type="evidence" value="ECO:0007669"/>
    <property type="project" value="UniProtKB-KW"/>
</dbReference>
<dbReference type="GO" id="GO:0007032">
    <property type="term" value="P:endosome organization"/>
    <property type="evidence" value="ECO:0000318"/>
    <property type="project" value="GO_Central"/>
</dbReference>
<dbReference type="GO" id="GO:0006886">
    <property type="term" value="P:intracellular protein transport"/>
    <property type="evidence" value="ECO:0007669"/>
    <property type="project" value="InterPro"/>
</dbReference>
<dbReference type="GO" id="GO:0048284">
    <property type="term" value="P:organelle fusion"/>
    <property type="evidence" value="ECO:0000318"/>
    <property type="project" value="GO_Central"/>
</dbReference>
<dbReference type="GO" id="GO:0032889">
    <property type="term" value="P:regulation of vacuole fusion, non-autophagic"/>
    <property type="evidence" value="ECO:0000303"/>
    <property type="project" value="ComplexPortal"/>
</dbReference>
<dbReference type="GO" id="GO:0042144">
    <property type="term" value="P:vacuole fusion, non-autophagic"/>
    <property type="evidence" value="ECO:0000303"/>
    <property type="project" value="ComplexPortal"/>
</dbReference>
<dbReference type="GO" id="GO:0007033">
    <property type="term" value="P:vacuole organization"/>
    <property type="evidence" value="ECO:0000318"/>
    <property type="project" value="GO_Central"/>
</dbReference>
<dbReference type="GO" id="GO:0006904">
    <property type="term" value="P:vesicle docking involved in exocytosis"/>
    <property type="evidence" value="ECO:0000318"/>
    <property type="project" value="GO_Central"/>
</dbReference>
<dbReference type="GO" id="GO:0099022">
    <property type="term" value="P:vesicle tethering"/>
    <property type="evidence" value="ECO:0000303"/>
    <property type="project" value="ComplexPortal"/>
</dbReference>
<dbReference type="CDD" id="cd16688">
    <property type="entry name" value="RING-H2_Vps11"/>
    <property type="match status" value="1"/>
</dbReference>
<dbReference type="Gene3D" id="2.130.10.10">
    <property type="entry name" value="YVTN repeat-like/Quinoprotein amine dehydrogenase"/>
    <property type="match status" value="1"/>
</dbReference>
<dbReference type="Gene3D" id="3.30.40.10">
    <property type="entry name" value="Zinc/RING finger domain, C3HC4 (zinc finger)"/>
    <property type="match status" value="1"/>
</dbReference>
<dbReference type="InterPro" id="IPR000547">
    <property type="entry name" value="Clathrin_H-chain/VPS_repeat"/>
</dbReference>
<dbReference type="InterPro" id="IPR016528">
    <property type="entry name" value="VPS11"/>
</dbReference>
<dbReference type="InterPro" id="IPR024763">
    <property type="entry name" value="VPS11_C"/>
</dbReference>
<dbReference type="InterPro" id="IPR015943">
    <property type="entry name" value="WD40/YVTN_repeat-like_dom_sf"/>
</dbReference>
<dbReference type="InterPro" id="IPR036322">
    <property type="entry name" value="WD40_repeat_dom_sf"/>
</dbReference>
<dbReference type="InterPro" id="IPR001841">
    <property type="entry name" value="Znf_RING"/>
</dbReference>
<dbReference type="InterPro" id="IPR013083">
    <property type="entry name" value="Znf_RING/FYVE/PHD"/>
</dbReference>
<dbReference type="PANTHER" id="PTHR23323">
    <property type="entry name" value="VACUOLAR PROTEIN SORTING-ASSOCIATED PROTEIN"/>
    <property type="match status" value="1"/>
</dbReference>
<dbReference type="PANTHER" id="PTHR23323:SF24">
    <property type="entry name" value="VACUOLAR PROTEIN SORTING-ASSOCIATED PROTEIN 11 HOMOLOG"/>
    <property type="match status" value="1"/>
</dbReference>
<dbReference type="Pfam" id="PF23341">
    <property type="entry name" value="PEP5_VPS11_N"/>
    <property type="match status" value="1"/>
</dbReference>
<dbReference type="Pfam" id="PF23356">
    <property type="entry name" value="TPR_PEP5_VPS11"/>
    <property type="match status" value="1"/>
</dbReference>
<dbReference type="Pfam" id="PF12451">
    <property type="entry name" value="VPS11_C"/>
    <property type="match status" value="1"/>
</dbReference>
<dbReference type="PIRSF" id="PIRSF007860">
    <property type="entry name" value="VPS11"/>
    <property type="match status" value="1"/>
</dbReference>
<dbReference type="SUPFAM" id="SSF57850">
    <property type="entry name" value="RING/U-box"/>
    <property type="match status" value="1"/>
</dbReference>
<dbReference type="SUPFAM" id="SSF50978">
    <property type="entry name" value="WD40 repeat-like"/>
    <property type="match status" value="1"/>
</dbReference>
<dbReference type="PROSITE" id="PS50236">
    <property type="entry name" value="CHCR"/>
    <property type="match status" value="1"/>
</dbReference>
<dbReference type="PROSITE" id="PS50089">
    <property type="entry name" value="ZF_RING_2"/>
    <property type="match status" value="1"/>
</dbReference>
<keyword id="KW-0967">Endosome</keyword>
<keyword id="KW-0458">Lysosome</keyword>
<keyword id="KW-0472">Membrane</keyword>
<keyword id="KW-0479">Metal-binding</keyword>
<keyword id="KW-0653">Protein transport</keyword>
<keyword id="KW-1185">Reference proteome</keyword>
<keyword id="KW-0813">Transport</keyword>
<keyword id="KW-0862">Zinc</keyword>
<keyword id="KW-0863">Zinc-finger</keyword>
<comment type="function">
    <text evidence="1 4 5 6 7 8">Plays a role in vesicle-mediated protein trafficking to lysosomal compartments including the endocytic membrane transport pathways (PubMed:26783301). Believed to act as a core component of the putative HOPS and CORVET endosomal tethering complexes which are proposed to be involved in the rab-5-to-rab-7 endosome conversion probably implicating sand-1, and via binding SNAREs and SNARE complexes to mediate tethering and docking events during SNARE-mediated membrane fusion (By similarity). The HOPS complex is proposed to be recruited to Rab7 on the late endosomal membrane and to regulate late endocytic, phagocytic and autophagic traffic towards lysosomes (By similarity). Within the HOPS complex, contributes to the normal development of gut granules in embryonic and adult intestinal cells (PubMed:24501423, PubMed:25273556). The CORVET complex is proposed to function as a Rab5 effector to mediate early endosome fusion probably in specific endosome subpopulations (By similarity). Required for fusion of endosomes and autophagosomes with lysosomes (PubMed:25273556). Involved in cargo transport from early to late endosomes and required for the transition from early to late endosomes (By similarity). Possibly has a role in clearance of apoptotic cells during programmed cell death (PubMed:18425118, PubMed:18923146).</text>
</comment>
<comment type="subunit">
    <text evidence="1">Probable core component of at least two putative endosomal tethering complexes, the homotypic fusion and vacuole protein sorting (HOPS) complex and the class C core vacuole/endosome tethering (CORVET) complex. Their common core is composed of the class C Vps proteins vps-11, vps-16 and vps-18, which in HOPS further associates with vps-33.1, vps-39 and vps-41 and in CORVET with vps-8 and vps-33.2.</text>
</comment>
<comment type="subcellular location">
    <subcellularLocation>
        <location evidence="1">Late endosome membrane</location>
        <topology evidence="1">Peripheral membrane protein</topology>
        <orientation evidence="1">Cytoplasmic side</orientation>
    </subcellularLocation>
    <subcellularLocation>
        <location evidence="1">Lysosome membrane</location>
        <topology evidence="1">Peripheral membrane protein</topology>
        <orientation evidence="1">Cytoplasmic side</orientation>
    </subcellularLocation>
</comment>
<comment type="disruption phenotype">
    <text evidence="4 5 6 7 8">Increased numbers of germ cell corpses (PubMed:18425118, PubMed:18923146). Reduced number of gut granules in the adult intestine (PubMed:24501423). Endosome/lysosome fusion defects in coelomocytes (PubMed:26783301). Double knockout with either sorf-1 or sorf-2 results in larger endosomes and larger lysosomes and thus suppresses the endosome/lysosome fusion defects in coelomocytes in the vps-11 single mutant (PubMed:26783301). RNAi-mediated knockdown results in a reduced number of gut granules in embryonic intestinal cells (PubMed:24501423). RNAi-mediated knockdown results in defective endosome maturation with the accumulation of small vesicles near the gut lumen and large endosomes/lysosomes on the basal side of the cell (PubMed:25273556).</text>
</comment>
<comment type="similarity">
    <text evidence="9">Belongs to the VPS11 family.</text>
</comment>